<comment type="subcellular location">
    <subcellularLocation>
        <location evidence="1">Cell membrane</location>
        <topology evidence="1">Multi-pass membrane protein</topology>
    </subcellularLocation>
</comment>
<comment type="similarity">
    <text evidence="1">Belongs to the UPF0182 family.</text>
</comment>
<accession>A5N466</accession>
<proteinExistence type="inferred from homology"/>
<gene>
    <name type="ordered locus">CKL_0015</name>
</gene>
<sequence length="904" mass="104290">MKRKMLWSSLIVILFVCILFLNKIVDFIINVEWYKEVGYLTVYFTKLIAICKLMIPLFIIIYISIVLYWRSLRLSIIKYRRAFEVNNDKVKNEKRIFIIVNLIVSFLFSYAFAATYWYRILQFNNSVPFNIKDPILNLDVSFYIFKLPLIQSLHSMILSLIIFLGLITLVTYFTLSVKDKVIWRNFKKDSGKIDILNSGITRFAGKQLAVLAALVMICVSIGYILKCIGLVYSQKGVTFGAGYTDAHVSLLLYKIIAAASIISAVIIFISILVSKVKPIIVSITVIVALILIKSLSYTVVQNFIVKSNQKTLEQPYIKYNIDYTRKAFNIENIDANPFQVKDNLTSQDIDNNMDTINNIRINSFEPTLEFYNQVQIIRYYYKFNNIDVDRYNINGKFNQIFIGTREINTKAIDPNTWQNRHLIYTHGYGIVMNKVNSVTSEGQPNFVIKDMPPQNSTDIKLDNARIYFGEKTDDYAIVDTKLKEFDYPKGSENATNNYDGSAGIKLGFINRILFAINQKDINFLLSRDILKESKILINRSIKDRVSKIAPFLNYDSDPYIVMSGGKLYWILDGYTVSDRYPFAQPQNNLNYIRNSVKVTVDAENGNVNFYIMDKSDPIVQSYAKIFPDLFKDINKLPSDIVQHFKYPKDLFNIQCSVLGKYHVTDPGVFYSGEDLWEVAKNQKQVSGEKYSMESSYMVMKLPNEQKEEMILLQYFNMRDKDNMVALFGARMDGENYGKMVLYKFPAEKTVYSPYLFKQKLNQDTTISSQLSLWNKDGSEVQFGDTIIVPINQSLVYVEPMYLRASGKEGIPEMKRVIVSYSDKMVLAESIDDALQQIFSYKQDYNQENSNESQIETPSYDINAEKLKEAKSLYEQALEAQKNGDWSKYGENIKKLGDIIDSLQK</sequence>
<organism>
    <name type="scientific">Clostridium kluyveri (strain ATCC 8527 / DSM 555 / NBRC 12016 / NCIMB 10680 / K1)</name>
    <dbReference type="NCBI Taxonomy" id="431943"/>
    <lineage>
        <taxon>Bacteria</taxon>
        <taxon>Bacillati</taxon>
        <taxon>Bacillota</taxon>
        <taxon>Clostridia</taxon>
        <taxon>Eubacteriales</taxon>
        <taxon>Clostridiaceae</taxon>
        <taxon>Clostridium</taxon>
    </lineage>
</organism>
<dbReference type="EMBL" id="CP000673">
    <property type="protein sequence ID" value="EDK32097.1"/>
    <property type="molecule type" value="Genomic_DNA"/>
</dbReference>
<dbReference type="RefSeq" id="WP_011988623.1">
    <property type="nucleotide sequence ID" value="NC_009706.1"/>
</dbReference>
<dbReference type="SMR" id="A5N466"/>
<dbReference type="STRING" id="431943.CKL_0015"/>
<dbReference type="KEGG" id="ckl:CKL_0015"/>
<dbReference type="eggNOG" id="COG1615">
    <property type="taxonomic scope" value="Bacteria"/>
</dbReference>
<dbReference type="HOGENOM" id="CLU_007733_0_0_9"/>
<dbReference type="Proteomes" id="UP000002411">
    <property type="component" value="Chromosome"/>
</dbReference>
<dbReference type="GO" id="GO:0005576">
    <property type="term" value="C:extracellular region"/>
    <property type="evidence" value="ECO:0007669"/>
    <property type="project" value="TreeGrafter"/>
</dbReference>
<dbReference type="GO" id="GO:0005886">
    <property type="term" value="C:plasma membrane"/>
    <property type="evidence" value="ECO:0007669"/>
    <property type="project" value="UniProtKB-SubCell"/>
</dbReference>
<dbReference type="HAMAP" id="MF_01600">
    <property type="entry name" value="UPF0182"/>
    <property type="match status" value="1"/>
</dbReference>
<dbReference type="InterPro" id="IPR005372">
    <property type="entry name" value="UPF0182"/>
</dbReference>
<dbReference type="NCBIfam" id="NF000825">
    <property type="entry name" value="PRK00068.1"/>
    <property type="match status" value="1"/>
</dbReference>
<dbReference type="PANTHER" id="PTHR39344">
    <property type="entry name" value="UPF0182 PROTEIN SLL1060"/>
    <property type="match status" value="1"/>
</dbReference>
<dbReference type="PANTHER" id="PTHR39344:SF1">
    <property type="entry name" value="UPF0182 PROTEIN SLL1060"/>
    <property type="match status" value="1"/>
</dbReference>
<dbReference type="Pfam" id="PF03699">
    <property type="entry name" value="UPF0182"/>
    <property type="match status" value="1"/>
</dbReference>
<keyword id="KW-1003">Cell membrane</keyword>
<keyword id="KW-0472">Membrane</keyword>
<keyword id="KW-1185">Reference proteome</keyword>
<keyword id="KW-0812">Transmembrane</keyword>
<keyword id="KW-1133">Transmembrane helix</keyword>
<feature type="chain" id="PRO_0000335545" description="UPF0182 protein CKL_0015">
    <location>
        <begin position="1"/>
        <end position="904"/>
    </location>
</feature>
<feature type="transmembrane region" description="Helical" evidence="1">
    <location>
        <begin position="9"/>
        <end position="29"/>
    </location>
</feature>
<feature type="transmembrane region" description="Helical" evidence="1">
    <location>
        <begin position="47"/>
        <end position="67"/>
    </location>
</feature>
<feature type="transmembrane region" description="Helical" evidence="1">
    <location>
        <begin position="96"/>
        <end position="116"/>
    </location>
</feature>
<feature type="transmembrane region" description="Helical" evidence="1">
    <location>
        <begin position="157"/>
        <end position="177"/>
    </location>
</feature>
<feature type="transmembrane region" description="Helical" evidence="1">
    <location>
        <begin position="208"/>
        <end position="228"/>
    </location>
</feature>
<feature type="transmembrane region" description="Helical" evidence="1">
    <location>
        <begin position="253"/>
        <end position="273"/>
    </location>
</feature>
<feature type="transmembrane region" description="Helical" evidence="1">
    <location>
        <begin position="279"/>
        <end position="299"/>
    </location>
</feature>
<evidence type="ECO:0000255" key="1">
    <source>
        <dbReference type="HAMAP-Rule" id="MF_01600"/>
    </source>
</evidence>
<reference key="1">
    <citation type="journal article" date="2008" name="Proc. Natl. Acad. Sci. U.S.A.">
        <title>The genome of Clostridium kluyveri, a strict anaerobe with unique metabolic features.</title>
        <authorList>
            <person name="Seedorf H."/>
            <person name="Fricke W.F."/>
            <person name="Veith B."/>
            <person name="Brueggemann H."/>
            <person name="Liesegang H."/>
            <person name="Strittmatter A."/>
            <person name="Miethke M."/>
            <person name="Buckel W."/>
            <person name="Hinderberger J."/>
            <person name="Li F."/>
            <person name="Hagemeier C."/>
            <person name="Thauer R.K."/>
            <person name="Gottschalk G."/>
        </authorList>
    </citation>
    <scope>NUCLEOTIDE SEQUENCE [LARGE SCALE GENOMIC DNA]</scope>
    <source>
        <strain>ATCC 8527 / DSM 555 / NBRC 12016 / NCIMB 10680 / K1</strain>
    </source>
</reference>
<protein>
    <recommendedName>
        <fullName evidence="1">UPF0182 protein CKL_0015</fullName>
    </recommendedName>
</protein>
<name>Y015_CLOK5</name>